<keyword id="KW-0256">Endoplasmic reticulum</keyword>
<keyword id="KW-0325">Glycoprotein</keyword>
<keyword id="KW-0378">Hydrolase</keyword>
<keyword id="KW-0472">Membrane</keyword>
<keyword id="KW-0645">Protease</keyword>
<keyword id="KW-0735">Signal-anchor</keyword>
<keyword id="KW-0812">Transmembrane</keyword>
<keyword id="KW-1133">Transmembrane helix</keyword>
<reference key="1">
    <citation type="journal article" date="2009" name="Genome Res.">
        <title>Genome structure of a Saccharomyces cerevisiae strain widely used in bioethanol production.</title>
        <authorList>
            <person name="Argueso J.L."/>
            <person name="Carazzolle M.F."/>
            <person name="Mieczkowski P.A."/>
            <person name="Duarte F.M."/>
            <person name="Netto O.V.C."/>
            <person name="Missawa S.K."/>
            <person name="Galzerani F."/>
            <person name="Costa G.G.L."/>
            <person name="Vidal R.O."/>
            <person name="Noronha M.F."/>
            <person name="Dominska M."/>
            <person name="Andrietta M.G.S."/>
            <person name="Andrietta S.R."/>
            <person name="Cunha A.F."/>
            <person name="Gomes L.H."/>
            <person name="Tavares F.C.A."/>
            <person name="Alcarde A.R."/>
            <person name="Dietrich F.S."/>
            <person name="McCusker J.H."/>
            <person name="Petes T.D."/>
            <person name="Pereira G.A.G."/>
        </authorList>
    </citation>
    <scope>NUCLEOTIDE SEQUENCE [LARGE SCALE GENOMIC DNA]</scope>
    <source>
        <strain>JAY291</strain>
    </source>
</reference>
<organism>
    <name type="scientific">Saccharomyces cerevisiae (strain JAY291)</name>
    <name type="common">Baker's yeast</name>
    <dbReference type="NCBI Taxonomy" id="574961"/>
    <lineage>
        <taxon>Eukaryota</taxon>
        <taxon>Fungi</taxon>
        <taxon>Dikarya</taxon>
        <taxon>Ascomycota</taxon>
        <taxon>Saccharomycotina</taxon>
        <taxon>Saccharomycetes</taxon>
        <taxon>Saccharomycetales</taxon>
        <taxon>Saccharomycetaceae</taxon>
        <taxon>Saccharomyces</taxon>
    </lineage>
</organism>
<evidence type="ECO:0000250" key="1">
    <source>
        <dbReference type="UniProtKB" id="P15367"/>
    </source>
</evidence>
<evidence type="ECO:0000250" key="2">
    <source>
        <dbReference type="UniProtKB" id="P67812"/>
    </source>
</evidence>
<evidence type="ECO:0000255" key="3"/>
<evidence type="ECO:0000305" key="4"/>
<name>SEC11_YEAS2</name>
<protein>
    <recommendedName>
        <fullName>Signal peptidase complex catalytic subunit SEC11</fullName>
        <ecNumber evidence="1">3.4.21.89</ecNumber>
    </recommendedName>
    <alternativeName>
        <fullName>Secretory protein 11</fullName>
    </alternativeName>
    <alternativeName>
        <fullName>Signal peptidase I</fullName>
    </alternativeName>
</protein>
<comment type="function">
    <text evidence="1 2">Catalytic component of the signal peptidase complex (SPC) which catalyzes the cleavage of N-terminal signal sequences from nascent proteins as they are translocated into the lumen of the endoplasmic reticulum (By similarity). Specifically cleaves N-terminal signal peptides that contain a hydrophobic alpha-helix (h-region) shorter than 18-20 amino acids (By similarity).</text>
</comment>
<comment type="catalytic activity">
    <reaction evidence="1">
        <text>Cleavage of hydrophobic, N-terminal signal or leader sequences from secreted and periplasmic proteins.</text>
        <dbReference type="EC" id="3.4.21.89"/>
    </reaction>
</comment>
<comment type="subunit">
    <text evidence="1 2">Component of the signal peptidase complex (SPC) composed of a catalytic subunit SEC11 and three accessory subunits SPC1, SPC2 and SPC3 (By similarity). The complex induces a local thinning of the ER membrane which is used to measure the length of the signal peptide (SP) h-region of protein substrates. This ensures the selectivity of the complex towards h-regions shorter than 18-20 amino acids (By similarity). SPC associates with the translocon complex (By similarity).</text>
</comment>
<comment type="subcellular location">
    <subcellularLocation>
        <location evidence="1">Endoplasmic reticulum membrane</location>
        <topology evidence="1">Single-pass type II membrane protein</topology>
    </subcellularLocation>
</comment>
<comment type="domain">
    <text evidence="2">The C-terminal short (CTS) helix is essential for catalytic activity. It may be accommodated as a transmembrane helix in the thinned membrane environment of the complex, similarly to the signal peptide in the complex substrates.</text>
</comment>
<comment type="similarity">
    <text evidence="4">Belongs to the peptidase S26B family.</text>
</comment>
<dbReference type="EC" id="3.4.21.89" evidence="1"/>
<dbReference type="EMBL" id="ACFL01000039">
    <property type="protein sequence ID" value="EEU08253.1"/>
    <property type="molecule type" value="Genomic_DNA"/>
</dbReference>
<dbReference type="SMR" id="C7GLT4"/>
<dbReference type="MEROPS" id="S26.010"/>
<dbReference type="GlyCosmos" id="C7GLT4">
    <property type="glycosylation" value="1 site, No reported glycans"/>
</dbReference>
<dbReference type="Proteomes" id="UP000008073">
    <property type="component" value="Unassembled WGS sequence"/>
</dbReference>
<dbReference type="GO" id="GO:0005787">
    <property type="term" value="C:signal peptidase complex"/>
    <property type="evidence" value="ECO:0007669"/>
    <property type="project" value="TreeGrafter"/>
</dbReference>
<dbReference type="GO" id="GO:0004252">
    <property type="term" value="F:serine-type endopeptidase activity"/>
    <property type="evidence" value="ECO:0007669"/>
    <property type="project" value="UniProtKB-EC"/>
</dbReference>
<dbReference type="GO" id="GO:0006465">
    <property type="term" value="P:signal peptide processing"/>
    <property type="evidence" value="ECO:0007669"/>
    <property type="project" value="InterPro"/>
</dbReference>
<dbReference type="CDD" id="cd06462">
    <property type="entry name" value="Peptidase_S24_S26"/>
    <property type="match status" value="1"/>
</dbReference>
<dbReference type="InterPro" id="IPR036286">
    <property type="entry name" value="LexA/Signal_pep-like_sf"/>
</dbReference>
<dbReference type="InterPro" id="IPR019758">
    <property type="entry name" value="Pept_S26A_signal_pept_1_CS"/>
</dbReference>
<dbReference type="InterPro" id="IPR019756">
    <property type="entry name" value="Pept_S26A_signal_pept_1_Ser-AS"/>
</dbReference>
<dbReference type="InterPro" id="IPR015927">
    <property type="entry name" value="Peptidase_S24_S26A/B/C"/>
</dbReference>
<dbReference type="InterPro" id="IPR001733">
    <property type="entry name" value="Peptidase_S26B"/>
</dbReference>
<dbReference type="NCBIfam" id="TIGR02228">
    <property type="entry name" value="sigpep_I_arch"/>
    <property type="match status" value="1"/>
</dbReference>
<dbReference type="PANTHER" id="PTHR10806">
    <property type="entry name" value="SIGNAL PEPTIDASE COMPLEX CATALYTIC SUBUNIT SEC11"/>
    <property type="match status" value="1"/>
</dbReference>
<dbReference type="PANTHER" id="PTHR10806:SF6">
    <property type="entry name" value="SIGNAL PEPTIDASE COMPLEX CATALYTIC SUBUNIT SEC11"/>
    <property type="match status" value="1"/>
</dbReference>
<dbReference type="Pfam" id="PF00717">
    <property type="entry name" value="Peptidase_S24"/>
    <property type="match status" value="1"/>
</dbReference>
<dbReference type="PRINTS" id="PR00728">
    <property type="entry name" value="SIGNALPTASE"/>
</dbReference>
<dbReference type="SUPFAM" id="SSF51306">
    <property type="entry name" value="LexA/Signal peptidase"/>
    <property type="match status" value="1"/>
</dbReference>
<dbReference type="PROSITE" id="PS00501">
    <property type="entry name" value="SPASE_I_1"/>
    <property type="match status" value="1"/>
</dbReference>
<dbReference type="PROSITE" id="PS00761">
    <property type="entry name" value="SPASE_I_3"/>
    <property type="match status" value="1"/>
</dbReference>
<proteinExistence type="inferred from homology"/>
<gene>
    <name type="primary">SEC11</name>
    <name type="ORF">C1Q_01195</name>
</gene>
<feature type="chain" id="PRO_0000412356" description="Signal peptidase complex catalytic subunit SEC11">
    <location>
        <begin position="1"/>
        <end position="167"/>
    </location>
</feature>
<feature type="topological domain" description="Cytoplasmic" evidence="3">
    <location>
        <begin position="1"/>
        <end position="9"/>
    </location>
</feature>
<feature type="transmembrane region" description="Helical; Signal-anchor for type II membrane protein" evidence="3">
    <location>
        <begin position="10"/>
        <end position="30"/>
    </location>
</feature>
<feature type="topological domain" description="Lumenal" evidence="3">
    <location>
        <begin position="31"/>
        <end position="167"/>
    </location>
</feature>
<feature type="region of interest" description="C-terminal short (CTS) helix" evidence="2">
    <location>
        <begin position="153"/>
        <end position="164"/>
    </location>
</feature>
<feature type="active site" description="Charge relay system" evidence="1">
    <location>
        <position position="44"/>
    </location>
</feature>
<feature type="active site" description="Charge relay system" evidence="1">
    <location>
        <position position="83"/>
    </location>
</feature>
<feature type="active site" description="Charge relay system" evidence="1">
    <location>
        <position position="109"/>
    </location>
</feature>
<feature type="glycosylation site" description="N-linked (GlcNAc...) asparagine" evidence="3">
    <location>
        <position position="121"/>
    </location>
</feature>
<sequence>MNLRFELQKLLNVCFLFASAYMFWQGLAIATNSASPIVVVLSGSMEPAFQRGDILFLWNRNTFNQVGDVVVYEVEGKQIPIVHRVLRQHNNHADKQFLLTKGDNNAGNDISLYANKKIYLNKSKEIVGTVKGYFPQLGYITIWISENKYAKFALLGMLGLSALLGGE</sequence>
<accession>C7GLT4</accession>